<sequence length="338" mass="36223">MQVYYDKDADLSIIQGKKVAVIGYGSQGHAHANNLKESGVDVVVGLREGSSSAAKAQKAGLAVASIEDAAAQADVVMILAPDEHQAVIYHNQIAPNVKPGAAIAFAHGFNIHFGQIQPAADLDVIMVAPKGPGHLVRSTYVEGGGVPSLIAIHQDATGKAKDIALSYASANGGGRAGVIETSFREETETDLFGEQAVLCGGITSLIQAGFETLVEAGYAPEMAYFECLHETKLIVDLLYQGGIANMRYSISNTAEYGDFTRGPRVINEESREAMREILAEIQEGEFAREFVLENQAGCPTLTARRRLAAEHEIEVVGERLRGMMPWINANKLVDKDKN</sequence>
<proteinExistence type="inferred from homology"/>
<comment type="function">
    <text evidence="1">Involved in the biosynthesis of branched-chain amino acids (BCAA). Catalyzes an alkyl-migration followed by a ketol-acid reduction of (S)-2-acetolactate (S2AL) to yield (R)-2,3-dihydroxy-isovalerate. In the isomerase reaction, S2AL is rearranged via a Mg-dependent methyl migration to produce 3-hydroxy-3-methyl-2-ketobutyrate (HMKB). In the reductase reaction, this 2-ketoacid undergoes a metal-dependent reduction by NADPH to yield (R)-2,3-dihydroxy-isovalerate.</text>
</comment>
<comment type="catalytic activity">
    <reaction evidence="1">
        <text>(2R)-2,3-dihydroxy-3-methylbutanoate + NADP(+) = (2S)-2-acetolactate + NADPH + H(+)</text>
        <dbReference type="Rhea" id="RHEA:22068"/>
        <dbReference type="ChEBI" id="CHEBI:15378"/>
        <dbReference type="ChEBI" id="CHEBI:49072"/>
        <dbReference type="ChEBI" id="CHEBI:57783"/>
        <dbReference type="ChEBI" id="CHEBI:58349"/>
        <dbReference type="ChEBI" id="CHEBI:58476"/>
        <dbReference type="EC" id="1.1.1.86"/>
    </reaction>
</comment>
<comment type="catalytic activity">
    <reaction evidence="1">
        <text>(2R,3R)-2,3-dihydroxy-3-methylpentanoate + NADP(+) = (S)-2-ethyl-2-hydroxy-3-oxobutanoate + NADPH + H(+)</text>
        <dbReference type="Rhea" id="RHEA:13493"/>
        <dbReference type="ChEBI" id="CHEBI:15378"/>
        <dbReference type="ChEBI" id="CHEBI:49256"/>
        <dbReference type="ChEBI" id="CHEBI:49258"/>
        <dbReference type="ChEBI" id="CHEBI:57783"/>
        <dbReference type="ChEBI" id="CHEBI:58349"/>
        <dbReference type="EC" id="1.1.1.86"/>
    </reaction>
</comment>
<comment type="cofactor">
    <cofactor evidence="1">
        <name>Mg(2+)</name>
        <dbReference type="ChEBI" id="CHEBI:18420"/>
    </cofactor>
    <text evidence="1">Binds 2 magnesium ions per subunit.</text>
</comment>
<comment type="pathway">
    <text evidence="1">Amino-acid biosynthesis; L-isoleucine biosynthesis; L-isoleucine from 2-oxobutanoate: step 2/4.</text>
</comment>
<comment type="pathway">
    <text evidence="1">Amino-acid biosynthesis; L-valine biosynthesis; L-valine from pyruvate: step 2/4.</text>
</comment>
<comment type="similarity">
    <text evidence="1">Belongs to the ketol-acid reductoisomerase family.</text>
</comment>
<name>ILVC_ALKEH</name>
<gene>
    <name evidence="1" type="primary">ilvC</name>
    <name type="ordered locus">Mlg_0544</name>
</gene>
<protein>
    <recommendedName>
        <fullName evidence="1">Ketol-acid reductoisomerase (NADP(+))</fullName>
        <shortName evidence="1">KARI</shortName>
        <ecNumber evidence="1">1.1.1.86</ecNumber>
    </recommendedName>
    <alternativeName>
        <fullName evidence="1">Acetohydroxy-acid isomeroreductase</fullName>
        <shortName evidence="1">AHIR</shortName>
    </alternativeName>
    <alternativeName>
        <fullName evidence="1">Alpha-keto-beta-hydroxylacyl reductoisomerase</fullName>
    </alternativeName>
    <alternativeName>
        <fullName evidence="1">Ketol-acid reductoisomerase type 1</fullName>
    </alternativeName>
    <alternativeName>
        <fullName evidence="1">Ketol-acid reductoisomerase type I</fullName>
    </alternativeName>
</protein>
<organism>
    <name type="scientific">Alkalilimnicola ehrlichii (strain ATCC BAA-1101 / DSM 17681 / MLHE-1)</name>
    <dbReference type="NCBI Taxonomy" id="187272"/>
    <lineage>
        <taxon>Bacteria</taxon>
        <taxon>Pseudomonadati</taxon>
        <taxon>Pseudomonadota</taxon>
        <taxon>Gammaproteobacteria</taxon>
        <taxon>Chromatiales</taxon>
        <taxon>Ectothiorhodospiraceae</taxon>
        <taxon>Alkalilimnicola</taxon>
    </lineage>
</organism>
<accession>Q0AB89</accession>
<evidence type="ECO:0000255" key="1">
    <source>
        <dbReference type="HAMAP-Rule" id="MF_00435"/>
    </source>
</evidence>
<evidence type="ECO:0000255" key="2">
    <source>
        <dbReference type="PROSITE-ProRule" id="PRU01197"/>
    </source>
</evidence>
<evidence type="ECO:0000255" key="3">
    <source>
        <dbReference type="PROSITE-ProRule" id="PRU01198"/>
    </source>
</evidence>
<reference key="1">
    <citation type="submission" date="2006-08" db="EMBL/GenBank/DDBJ databases">
        <title>Complete sequence of Alkalilimnicola ehrilichei MLHE-1.</title>
        <authorList>
            <person name="Copeland A."/>
            <person name="Lucas S."/>
            <person name="Lapidus A."/>
            <person name="Barry K."/>
            <person name="Detter J.C."/>
            <person name="Glavina del Rio T."/>
            <person name="Hammon N."/>
            <person name="Israni S."/>
            <person name="Dalin E."/>
            <person name="Tice H."/>
            <person name="Pitluck S."/>
            <person name="Sims D."/>
            <person name="Brettin T."/>
            <person name="Bruce D."/>
            <person name="Han C."/>
            <person name="Tapia R."/>
            <person name="Gilna P."/>
            <person name="Schmutz J."/>
            <person name="Larimer F."/>
            <person name="Land M."/>
            <person name="Hauser L."/>
            <person name="Kyrpides N."/>
            <person name="Mikhailova N."/>
            <person name="Oremland R.S."/>
            <person name="Hoeft S.E."/>
            <person name="Switzer-Blum J."/>
            <person name="Kulp T."/>
            <person name="King G."/>
            <person name="Tabita R."/>
            <person name="Witte B."/>
            <person name="Santini J.M."/>
            <person name="Basu P."/>
            <person name="Hollibaugh J.T."/>
            <person name="Xie G."/>
            <person name="Stolz J.F."/>
            <person name="Richardson P."/>
        </authorList>
    </citation>
    <scope>NUCLEOTIDE SEQUENCE [LARGE SCALE GENOMIC DNA]</scope>
    <source>
        <strain>ATCC BAA-1101 / DSM 17681 / MLHE-1</strain>
    </source>
</reference>
<dbReference type="EC" id="1.1.1.86" evidence="1"/>
<dbReference type="EMBL" id="CP000453">
    <property type="protein sequence ID" value="ABI55898.1"/>
    <property type="molecule type" value="Genomic_DNA"/>
</dbReference>
<dbReference type="RefSeq" id="WP_011628293.1">
    <property type="nucleotide sequence ID" value="NC_008340.1"/>
</dbReference>
<dbReference type="SMR" id="Q0AB89"/>
<dbReference type="KEGG" id="aeh:Mlg_0544"/>
<dbReference type="eggNOG" id="COG0059">
    <property type="taxonomic scope" value="Bacteria"/>
</dbReference>
<dbReference type="HOGENOM" id="CLU_033821_0_1_6"/>
<dbReference type="OrthoDB" id="9804088at2"/>
<dbReference type="UniPathway" id="UPA00047">
    <property type="reaction ID" value="UER00056"/>
</dbReference>
<dbReference type="UniPathway" id="UPA00049">
    <property type="reaction ID" value="UER00060"/>
</dbReference>
<dbReference type="Proteomes" id="UP000001962">
    <property type="component" value="Chromosome"/>
</dbReference>
<dbReference type="GO" id="GO:0005829">
    <property type="term" value="C:cytosol"/>
    <property type="evidence" value="ECO:0007669"/>
    <property type="project" value="TreeGrafter"/>
</dbReference>
<dbReference type="GO" id="GO:0004455">
    <property type="term" value="F:ketol-acid reductoisomerase activity"/>
    <property type="evidence" value="ECO:0007669"/>
    <property type="project" value="UniProtKB-UniRule"/>
</dbReference>
<dbReference type="GO" id="GO:0000287">
    <property type="term" value="F:magnesium ion binding"/>
    <property type="evidence" value="ECO:0007669"/>
    <property type="project" value="UniProtKB-UniRule"/>
</dbReference>
<dbReference type="GO" id="GO:0050661">
    <property type="term" value="F:NADP binding"/>
    <property type="evidence" value="ECO:0007669"/>
    <property type="project" value="InterPro"/>
</dbReference>
<dbReference type="GO" id="GO:0009097">
    <property type="term" value="P:isoleucine biosynthetic process"/>
    <property type="evidence" value="ECO:0007669"/>
    <property type="project" value="UniProtKB-UniRule"/>
</dbReference>
<dbReference type="GO" id="GO:0009099">
    <property type="term" value="P:L-valine biosynthetic process"/>
    <property type="evidence" value="ECO:0007669"/>
    <property type="project" value="UniProtKB-UniRule"/>
</dbReference>
<dbReference type="FunFam" id="3.40.50.720:FF:000023">
    <property type="entry name" value="Ketol-acid reductoisomerase (NADP(+))"/>
    <property type="match status" value="1"/>
</dbReference>
<dbReference type="Gene3D" id="6.10.240.10">
    <property type="match status" value="1"/>
</dbReference>
<dbReference type="Gene3D" id="3.40.50.720">
    <property type="entry name" value="NAD(P)-binding Rossmann-like Domain"/>
    <property type="match status" value="1"/>
</dbReference>
<dbReference type="HAMAP" id="MF_00435">
    <property type="entry name" value="IlvC"/>
    <property type="match status" value="1"/>
</dbReference>
<dbReference type="InterPro" id="IPR008927">
    <property type="entry name" value="6-PGluconate_DH-like_C_sf"/>
</dbReference>
<dbReference type="InterPro" id="IPR013023">
    <property type="entry name" value="KARI"/>
</dbReference>
<dbReference type="InterPro" id="IPR000506">
    <property type="entry name" value="KARI_C"/>
</dbReference>
<dbReference type="InterPro" id="IPR013116">
    <property type="entry name" value="KARI_N"/>
</dbReference>
<dbReference type="InterPro" id="IPR014359">
    <property type="entry name" value="KARI_prok"/>
</dbReference>
<dbReference type="InterPro" id="IPR036291">
    <property type="entry name" value="NAD(P)-bd_dom_sf"/>
</dbReference>
<dbReference type="NCBIfam" id="TIGR00465">
    <property type="entry name" value="ilvC"/>
    <property type="match status" value="1"/>
</dbReference>
<dbReference type="NCBIfam" id="NF004017">
    <property type="entry name" value="PRK05479.1"/>
    <property type="match status" value="1"/>
</dbReference>
<dbReference type="NCBIfam" id="NF009940">
    <property type="entry name" value="PRK13403.1"/>
    <property type="match status" value="1"/>
</dbReference>
<dbReference type="PANTHER" id="PTHR21371">
    <property type="entry name" value="KETOL-ACID REDUCTOISOMERASE, MITOCHONDRIAL"/>
    <property type="match status" value="1"/>
</dbReference>
<dbReference type="PANTHER" id="PTHR21371:SF1">
    <property type="entry name" value="KETOL-ACID REDUCTOISOMERASE, MITOCHONDRIAL"/>
    <property type="match status" value="1"/>
</dbReference>
<dbReference type="Pfam" id="PF01450">
    <property type="entry name" value="KARI_C"/>
    <property type="match status" value="1"/>
</dbReference>
<dbReference type="Pfam" id="PF07991">
    <property type="entry name" value="KARI_N"/>
    <property type="match status" value="1"/>
</dbReference>
<dbReference type="PIRSF" id="PIRSF000116">
    <property type="entry name" value="IlvC_gammaproteo"/>
    <property type="match status" value="1"/>
</dbReference>
<dbReference type="SUPFAM" id="SSF48179">
    <property type="entry name" value="6-phosphogluconate dehydrogenase C-terminal domain-like"/>
    <property type="match status" value="1"/>
</dbReference>
<dbReference type="SUPFAM" id="SSF51735">
    <property type="entry name" value="NAD(P)-binding Rossmann-fold domains"/>
    <property type="match status" value="1"/>
</dbReference>
<dbReference type="PROSITE" id="PS51851">
    <property type="entry name" value="KARI_C"/>
    <property type="match status" value="1"/>
</dbReference>
<dbReference type="PROSITE" id="PS51850">
    <property type="entry name" value="KARI_N"/>
    <property type="match status" value="1"/>
</dbReference>
<keyword id="KW-0028">Amino-acid biosynthesis</keyword>
<keyword id="KW-0100">Branched-chain amino acid biosynthesis</keyword>
<keyword id="KW-0460">Magnesium</keyword>
<keyword id="KW-0479">Metal-binding</keyword>
<keyword id="KW-0521">NADP</keyword>
<keyword id="KW-0560">Oxidoreductase</keyword>
<keyword id="KW-1185">Reference proteome</keyword>
<feature type="chain" id="PRO_1000050476" description="Ketol-acid reductoisomerase (NADP(+))">
    <location>
        <begin position="1"/>
        <end position="338"/>
    </location>
</feature>
<feature type="domain" description="KARI N-terminal Rossmann" evidence="2">
    <location>
        <begin position="1"/>
        <end position="181"/>
    </location>
</feature>
<feature type="domain" description="KARI C-terminal knotted" evidence="3">
    <location>
        <begin position="182"/>
        <end position="327"/>
    </location>
</feature>
<feature type="active site" evidence="1">
    <location>
        <position position="107"/>
    </location>
</feature>
<feature type="binding site" evidence="1">
    <location>
        <begin position="24"/>
        <end position="27"/>
    </location>
    <ligand>
        <name>NADP(+)</name>
        <dbReference type="ChEBI" id="CHEBI:58349"/>
    </ligand>
</feature>
<feature type="binding site" evidence="1">
    <location>
        <position position="47"/>
    </location>
    <ligand>
        <name>NADP(+)</name>
        <dbReference type="ChEBI" id="CHEBI:58349"/>
    </ligand>
</feature>
<feature type="binding site" evidence="1">
    <location>
        <position position="50"/>
    </location>
    <ligand>
        <name>NADP(+)</name>
        <dbReference type="ChEBI" id="CHEBI:58349"/>
    </ligand>
</feature>
<feature type="binding site" evidence="1">
    <location>
        <position position="52"/>
    </location>
    <ligand>
        <name>NADP(+)</name>
        <dbReference type="ChEBI" id="CHEBI:58349"/>
    </ligand>
</feature>
<feature type="binding site" evidence="1">
    <location>
        <begin position="82"/>
        <end position="85"/>
    </location>
    <ligand>
        <name>NADP(+)</name>
        <dbReference type="ChEBI" id="CHEBI:58349"/>
    </ligand>
</feature>
<feature type="binding site" evidence="1">
    <location>
        <position position="133"/>
    </location>
    <ligand>
        <name>NADP(+)</name>
        <dbReference type="ChEBI" id="CHEBI:58349"/>
    </ligand>
</feature>
<feature type="binding site" evidence="1">
    <location>
        <position position="190"/>
    </location>
    <ligand>
        <name>Mg(2+)</name>
        <dbReference type="ChEBI" id="CHEBI:18420"/>
        <label>1</label>
    </ligand>
</feature>
<feature type="binding site" evidence="1">
    <location>
        <position position="190"/>
    </location>
    <ligand>
        <name>Mg(2+)</name>
        <dbReference type="ChEBI" id="CHEBI:18420"/>
        <label>2</label>
    </ligand>
</feature>
<feature type="binding site" evidence="1">
    <location>
        <position position="194"/>
    </location>
    <ligand>
        <name>Mg(2+)</name>
        <dbReference type="ChEBI" id="CHEBI:18420"/>
        <label>1</label>
    </ligand>
</feature>
<feature type="binding site" evidence="1">
    <location>
        <position position="226"/>
    </location>
    <ligand>
        <name>Mg(2+)</name>
        <dbReference type="ChEBI" id="CHEBI:18420"/>
        <label>2</label>
    </ligand>
</feature>
<feature type="binding site" evidence="1">
    <location>
        <position position="230"/>
    </location>
    <ligand>
        <name>Mg(2+)</name>
        <dbReference type="ChEBI" id="CHEBI:18420"/>
        <label>2</label>
    </ligand>
</feature>
<feature type="binding site" evidence="1">
    <location>
        <position position="251"/>
    </location>
    <ligand>
        <name>substrate</name>
    </ligand>
</feature>